<gene>
    <name type="primary">MT-CYB</name>
    <name type="synonym">COB</name>
    <name type="synonym">CYTB</name>
    <name type="synonym">MTCYB</name>
</gene>
<dbReference type="EMBL" id="M35693">
    <property type="protein sequence ID" value="AAA16981.2"/>
    <property type="molecule type" value="Genomic_DNA"/>
</dbReference>
<dbReference type="PIR" id="B23725">
    <property type="entry name" value="B23725"/>
</dbReference>
<dbReference type="GO" id="GO:0005743">
    <property type="term" value="C:mitochondrial inner membrane"/>
    <property type="evidence" value="ECO:0007669"/>
    <property type="project" value="UniProtKB-SubCell"/>
</dbReference>
<dbReference type="GO" id="GO:0045275">
    <property type="term" value="C:respiratory chain complex III"/>
    <property type="evidence" value="ECO:0007669"/>
    <property type="project" value="InterPro"/>
</dbReference>
<dbReference type="GO" id="GO:0046872">
    <property type="term" value="F:metal ion binding"/>
    <property type="evidence" value="ECO:0007669"/>
    <property type="project" value="UniProtKB-KW"/>
</dbReference>
<dbReference type="GO" id="GO:0008121">
    <property type="term" value="F:ubiquinol-cytochrome-c reductase activity"/>
    <property type="evidence" value="ECO:0007669"/>
    <property type="project" value="InterPro"/>
</dbReference>
<dbReference type="GO" id="GO:0006122">
    <property type="term" value="P:mitochondrial electron transport, ubiquinol to cytochrome c"/>
    <property type="evidence" value="ECO:0007669"/>
    <property type="project" value="TreeGrafter"/>
</dbReference>
<dbReference type="CDD" id="cd00290">
    <property type="entry name" value="cytochrome_b_C"/>
    <property type="match status" value="1"/>
</dbReference>
<dbReference type="CDD" id="cd00284">
    <property type="entry name" value="Cytochrome_b_N"/>
    <property type="match status" value="1"/>
</dbReference>
<dbReference type="FunFam" id="1.20.810.10:FF:000002">
    <property type="entry name" value="Cytochrome b"/>
    <property type="match status" value="1"/>
</dbReference>
<dbReference type="Gene3D" id="1.20.810.10">
    <property type="entry name" value="Cytochrome Bc1 Complex, Chain C"/>
    <property type="match status" value="1"/>
</dbReference>
<dbReference type="InterPro" id="IPR005798">
    <property type="entry name" value="Cyt_b/b6_C"/>
</dbReference>
<dbReference type="InterPro" id="IPR036150">
    <property type="entry name" value="Cyt_b/b6_C_sf"/>
</dbReference>
<dbReference type="InterPro" id="IPR005797">
    <property type="entry name" value="Cyt_b/b6_N"/>
</dbReference>
<dbReference type="InterPro" id="IPR027387">
    <property type="entry name" value="Cytb/b6-like_sf"/>
</dbReference>
<dbReference type="InterPro" id="IPR030689">
    <property type="entry name" value="Cytochrome_b"/>
</dbReference>
<dbReference type="InterPro" id="IPR048260">
    <property type="entry name" value="Cytochrome_b_C_euk/bac"/>
</dbReference>
<dbReference type="InterPro" id="IPR048259">
    <property type="entry name" value="Cytochrome_b_N_euk/bac"/>
</dbReference>
<dbReference type="InterPro" id="IPR016174">
    <property type="entry name" value="Di-haem_cyt_TM"/>
</dbReference>
<dbReference type="PANTHER" id="PTHR19271">
    <property type="entry name" value="CYTOCHROME B"/>
    <property type="match status" value="1"/>
</dbReference>
<dbReference type="PANTHER" id="PTHR19271:SF16">
    <property type="entry name" value="CYTOCHROME B"/>
    <property type="match status" value="1"/>
</dbReference>
<dbReference type="Pfam" id="PF00032">
    <property type="entry name" value="Cytochrom_B_C"/>
    <property type="match status" value="1"/>
</dbReference>
<dbReference type="Pfam" id="PF00033">
    <property type="entry name" value="Cytochrome_B"/>
    <property type="match status" value="1"/>
</dbReference>
<dbReference type="PIRSF" id="PIRSF038885">
    <property type="entry name" value="COB"/>
    <property type="match status" value="1"/>
</dbReference>
<dbReference type="SUPFAM" id="SSF81648">
    <property type="entry name" value="a domain/subunit of cytochrome bc1 complex (Ubiquinol-cytochrome c reductase)"/>
    <property type="match status" value="1"/>
</dbReference>
<dbReference type="SUPFAM" id="SSF81342">
    <property type="entry name" value="Transmembrane di-heme cytochromes"/>
    <property type="match status" value="1"/>
</dbReference>
<dbReference type="PROSITE" id="PS51003">
    <property type="entry name" value="CYTB_CTER"/>
    <property type="match status" value="1"/>
</dbReference>
<dbReference type="PROSITE" id="PS51002">
    <property type="entry name" value="CYTB_NTER"/>
    <property type="match status" value="1"/>
</dbReference>
<proteinExistence type="inferred from homology"/>
<protein>
    <recommendedName>
        <fullName>Cytochrome b</fullName>
    </recommendedName>
    <alternativeName>
        <fullName>Complex III subunit 3</fullName>
    </alternativeName>
    <alternativeName>
        <fullName>Complex III subunit III</fullName>
    </alternativeName>
    <alternativeName>
        <fullName>Cytochrome b-c1 complex subunit 3</fullName>
    </alternativeName>
    <alternativeName>
        <fullName>Ubiquinol-cytochrome-c reductase complex cytochrome b subunit</fullName>
    </alternativeName>
</protein>
<sequence length="379" mass="42335">MKILRKNHPLLKIINHSFIDLPTPSNISSWWNFGSLLGMCLVIQILTGLFLAMHYTSDTTTAFSSVAHICRDVNYGWLIRYLHANGASMFFICLFIHVGRGIYYGSYVLSETWNIGIILFLTTMATAFVGYVLPWGQMSFWGATVITNLLSAIPYIGSTLVEWIWGGFSVDKATLTRFFAFHFILPFIIAAFALVHLLFLHETGSNNPSGLNSDSDKIPFHPYYTTKDLLGIFLLLLVLMILALFFPDILGDPDNFTPANPLNTPAHXXPXXXXLFAYAILRSIPNKLGGVLALILSILILAAFPLLNTSKQHGLIFRPVTQVIYWXXIANLLVLTWIGGQPVEYPFTMIGQIASITYFAIXIILIPVSNTIENNIIKL</sequence>
<comment type="function">
    <text evidence="2">Component of the ubiquinol-cytochrome c reductase complex (complex III or cytochrome b-c1 complex) that is part of the mitochondrial respiratory chain. The b-c1 complex mediates electron transfer from ubiquinol to cytochrome c. Contributes to the generation of a proton gradient across the mitochondrial membrane that is then used for ATP synthesis.</text>
</comment>
<comment type="cofactor">
    <cofactor evidence="2">
        <name>heme b</name>
        <dbReference type="ChEBI" id="CHEBI:60344"/>
    </cofactor>
    <text evidence="2">Binds 2 heme b groups non-covalently.</text>
</comment>
<comment type="subunit">
    <text evidence="2">The cytochrome bc1 complex contains 11 subunits: 3 respiratory subunits (MT-CYB, CYC1 and UQCRFS1), 2 core proteins (UQCRC1 and UQCRC2) and 6 low-molecular weight proteins (UQCRH/QCR6, UQCRB/QCR7, UQCRQ/QCR8, UQCR10/QCR9, UQCR11/QCR10 and a cleavage product of UQCRFS1). This cytochrome bc1 complex then forms a dimer.</text>
</comment>
<comment type="subcellular location">
    <subcellularLocation>
        <location evidence="2">Mitochondrion inner membrane</location>
        <topology evidence="2">Multi-pass membrane protein</topology>
    </subcellularLocation>
</comment>
<comment type="miscellaneous">
    <text evidence="1">Heme 1 (or BL or b562) is low-potential and absorbs at about 562 nm, and heme 2 (or BH or b566) is high-potential and absorbs at about 566 nm.</text>
</comment>
<comment type="similarity">
    <text evidence="3 4">Belongs to the cytochrome b family.</text>
</comment>
<comment type="caution">
    <text evidence="2">The full-length protein contains only eight transmembrane helices, not nine as predicted by bioinformatics tools.</text>
</comment>
<name>CYB_AKOLP</name>
<geneLocation type="mitochondrion"/>
<evidence type="ECO:0000250" key="1"/>
<evidence type="ECO:0000250" key="2">
    <source>
        <dbReference type="UniProtKB" id="P00157"/>
    </source>
</evidence>
<evidence type="ECO:0000255" key="3">
    <source>
        <dbReference type="PROSITE-ProRule" id="PRU00967"/>
    </source>
</evidence>
<evidence type="ECO:0000255" key="4">
    <source>
        <dbReference type="PROSITE-ProRule" id="PRU00968"/>
    </source>
</evidence>
<organism>
    <name type="scientific">Akodon lutescens puer</name>
    <name type="common">Altiplano grass mouse</name>
    <name type="synonym">Akodon puer</name>
    <dbReference type="NCBI Taxonomy" id="10076"/>
    <lineage>
        <taxon>Eukaryota</taxon>
        <taxon>Metazoa</taxon>
        <taxon>Chordata</taxon>
        <taxon>Craniata</taxon>
        <taxon>Vertebrata</taxon>
        <taxon>Euteleostomi</taxon>
        <taxon>Mammalia</taxon>
        <taxon>Eutheria</taxon>
        <taxon>Euarchontoglires</taxon>
        <taxon>Glires</taxon>
        <taxon>Rodentia</taxon>
        <taxon>Myomorpha</taxon>
        <taxon>Muroidea</taxon>
        <taxon>Cricetidae</taxon>
        <taxon>Sigmodontinae</taxon>
        <taxon>Akodon</taxon>
    </lineage>
</organism>
<reference key="1">
    <citation type="submission" date="2003-12" db="EMBL/GenBank/DDBJ databases">
        <title>Molecular phylogenetics and diversification of South American grass mice, genus Akodon.</title>
        <authorList>
            <person name="Smith M.F."/>
            <person name="Patton J.L."/>
        </authorList>
    </citation>
    <scope>NUCLEOTIDE SEQUENCE [GENOMIC DNA]</scope>
    <source>
        <strain>Isolate MVZ 171612</strain>
        <tissue>Liver</tissue>
    </source>
</reference>
<reference key="2">
    <citation type="journal article" date="1993" name="Biol. J. Linn. Soc. Lond.">
        <title>The diversification of South American murid rodents: evidence from mitochondrial DNA sequence data for the akodontine tribe.</title>
        <authorList>
            <person name="Smith M.F."/>
            <person name="Patton J.L."/>
        </authorList>
    </citation>
    <scope>NUCLEOTIDE SEQUENCE [GENOMIC DNA] OF 1-267</scope>
    <source>
        <strain>Isolate MVZ 171612</strain>
        <tissue>Liver</tissue>
    </source>
</reference>
<reference key="3">
    <citation type="journal article" date="1991" name="Mol. Biol. Evol.">
        <title>Variation in mitochondrial cytochrome b sequence in natural populations of South American akodontine rodents (Muridae: Sigmodontinae).</title>
        <authorList>
            <person name="Smith M.F."/>
            <person name="Patton J.L."/>
        </authorList>
    </citation>
    <scope>NUCLEOTIDE SEQUENCE [GENOMIC DNA] OF 1-133</scope>
    <source>
        <strain>Isolate MVZ 171612</strain>
        <tissue>Liver</tissue>
    </source>
</reference>
<accession>P21719</accession>
<feature type="chain" id="PRO_0000060553" description="Cytochrome b">
    <location>
        <begin position="1"/>
        <end position="379"/>
    </location>
</feature>
<feature type="transmembrane region" description="Helical" evidence="2">
    <location>
        <begin position="33"/>
        <end position="53"/>
    </location>
</feature>
<feature type="transmembrane region" description="Helical" evidence="2">
    <location>
        <begin position="77"/>
        <end position="98"/>
    </location>
</feature>
<feature type="transmembrane region" description="Helical" evidence="2">
    <location>
        <begin position="113"/>
        <end position="133"/>
    </location>
</feature>
<feature type="transmembrane region" description="Helical" evidence="2">
    <location>
        <begin position="178"/>
        <end position="198"/>
    </location>
</feature>
<feature type="transmembrane region" description="Helical" evidence="2">
    <location>
        <begin position="226"/>
        <end position="246"/>
    </location>
</feature>
<feature type="transmembrane region" description="Helical" evidence="2">
    <location>
        <begin position="288"/>
        <end position="308"/>
    </location>
</feature>
<feature type="transmembrane region" description="Helical" evidence="2">
    <location>
        <begin position="320"/>
        <end position="340"/>
    </location>
</feature>
<feature type="transmembrane region" description="Helical" evidence="2">
    <location>
        <begin position="347"/>
        <end position="367"/>
    </location>
</feature>
<feature type="binding site" description="axial binding residue" evidence="2">
    <location>
        <position position="83"/>
    </location>
    <ligand>
        <name>heme b</name>
        <dbReference type="ChEBI" id="CHEBI:60344"/>
        <label>b562</label>
    </ligand>
    <ligandPart>
        <name>Fe</name>
        <dbReference type="ChEBI" id="CHEBI:18248"/>
    </ligandPart>
</feature>
<feature type="binding site" description="axial binding residue" evidence="2">
    <location>
        <position position="97"/>
    </location>
    <ligand>
        <name>heme b</name>
        <dbReference type="ChEBI" id="CHEBI:60344"/>
        <label>b566</label>
    </ligand>
    <ligandPart>
        <name>Fe</name>
        <dbReference type="ChEBI" id="CHEBI:18248"/>
    </ligandPart>
</feature>
<feature type="binding site" description="axial binding residue" evidence="2">
    <location>
        <position position="182"/>
    </location>
    <ligand>
        <name>heme b</name>
        <dbReference type="ChEBI" id="CHEBI:60344"/>
        <label>b562</label>
    </ligand>
    <ligandPart>
        <name>Fe</name>
        <dbReference type="ChEBI" id="CHEBI:18248"/>
    </ligandPart>
</feature>
<feature type="binding site" description="axial binding residue" evidence="2">
    <location>
        <position position="196"/>
    </location>
    <ligand>
        <name>heme b</name>
        <dbReference type="ChEBI" id="CHEBI:60344"/>
        <label>b566</label>
    </ligand>
    <ligandPart>
        <name>Fe</name>
        <dbReference type="ChEBI" id="CHEBI:18248"/>
    </ligandPart>
</feature>
<feature type="binding site" evidence="2">
    <location>
        <position position="201"/>
    </location>
    <ligand>
        <name>a ubiquinone</name>
        <dbReference type="ChEBI" id="CHEBI:16389"/>
    </ligand>
</feature>
<keyword id="KW-0249">Electron transport</keyword>
<keyword id="KW-0349">Heme</keyword>
<keyword id="KW-0408">Iron</keyword>
<keyword id="KW-0472">Membrane</keyword>
<keyword id="KW-0479">Metal-binding</keyword>
<keyword id="KW-0496">Mitochondrion</keyword>
<keyword id="KW-0999">Mitochondrion inner membrane</keyword>
<keyword id="KW-0679">Respiratory chain</keyword>
<keyword id="KW-0812">Transmembrane</keyword>
<keyword id="KW-1133">Transmembrane helix</keyword>
<keyword id="KW-0813">Transport</keyword>
<keyword id="KW-0830">Ubiquinone</keyword>